<reference key="1">
    <citation type="journal article" date="2006" name="Proc. Natl. Acad. Sci. U.S.A.">
        <title>High expression of a cytokeratin-associated protein in many cancers.</title>
        <authorList>
            <person name="Egland K.A."/>
            <person name="Liu X.F."/>
            <person name="Squires S."/>
            <person name="Nagata S."/>
            <person name="Man Y.-G."/>
            <person name="Bera T.K."/>
            <person name="Onda M."/>
            <person name="Vincent J.J."/>
            <person name="Strausberg R.L."/>
            <person name="Lee B."/>
            <person name="Pastan I."/>
        </authorList>
    </citation>
    <scope>NUCLEOTIDE SEQUENCE [MRNA] (ISOFORM 1)</scope>
    <scope>TISSUE SPECIFICITY</scope>
    <scope>SUBCELLULAR LOCATION</scope>
    <source>
        <tissue>Mammary gland</tissue>
        <tissue>Prostatic carcinoma</tissue>
    </source>
</reference>
<reference key="2">
    <citation type="journal article" date="2009" name="Biochem. Biophys. Res. Commun.">
        <title>Non-AUG translational initiation of a short CAPC transcript generating protein isoform.</title>
        <authorList>
            <person name="Anaganti S."/>
            <person name="Hansen J.K."/>
            <person name="Ha D."/>
            <person name="Hahn Y."/>
            <person name="Chertov O."/>
            <person name="Pastan I."/>
            <person name="Bera T.K."/>
        </authorList>
    </citation>
    <scope>NUCLEOTIDE SEQUENCE [MRNA] (ISOFORM 2)</scope>
    <scope>PROTEIN SEQUENCE OF 291-304</scope>
    <scope>USE OF A NON-AUG INITIATOR START CODON</scope>
    <scope>IDENTIFICATION BY MASS SPECTROMETRY</scope>
    <scope>TISSUE SPECIFICITY</scope>
</reference>
<reference key="3">
    <citation type="journal article" date="2004" name="Nature">
        <title>DNA sequence and analysis of human chromosome 9.</title>
        <authorList>
            <person name="Humphray S.J."/>
            <person name="Oliver K."/>
            <person name="Hunt A.R."/>
            <person name="Plumb R.W."/>
            <person name="Loveland J.E."/>
            <person name="Howe K.L."/>
            <person name="Andrews T.D."/>
            <person name="Searle S."/>
            <person name="Hunt S.E."/>
            <person name="Scott C.E."/>
            <person name="Jones M.C."/>
            <person name="Ainscough R."/>
            <person name="Almeida J.P."/>
            <person name="Ambrose K.D."/>
            <person name="Ashwell R.I.S."/>
            <person name="Babbage A.K."/>
            <person name="Babbage S."/>
            <person name="Bagguley C.L."/>
            <person name="Bailey J."/>
            <person name="Banerjee R."/>
            <person name="Barker D.J."/>
            <person name="Barlow K.F."/>
            <person name="Bates K."/>
            <person name="Beasley H."/>
            <person name="Beasley O."/>
            <person name="Bird C.P."/>
            <person name="Bray-Allen S."/>
            <person name="Brown A.J."/>
            <person name="Brown J.Y."/>
            <person name="Burford D."/>
            <person name="Burrill W."/>
            <person name="Burton J."/>
            <person name="Carder C."/>
            <person name="Carter N.P."/>
            <person name="Chapman J.C."/>
            <person name="Chen Y."/>
            <person name="Clarke G."/>
            <person name="Clark S.Y."/>
            <person name="Clee C.M."/>
            <person name="Clegg S."/>
            <person name="Collier R.E."/>
            <person name="Corby N."/>
            <person name="Crosier M."/>
            <person name="Cummings A.T."/>
            <person name="Davies J."/>
            <person name="Dhami P."/>
            <person name="Dunn M."/>
            <person name="Dutta I."/>
            <person name="Dyer L.W."/>
            <person name="Earthrowl M.E."/>
            <person name="Faulkner L."/>
            <person name="Fleming C.J."/>
            <person name="Frankish A."/>
            <person name="Frankland J.A."/>
            <person name="French L."/>
            <person name="Fricker D.G."/>
            <person name="Garner P."/>
            <person name="Garnett J."/>
            <person name="Ghori J."/>
            <person name="Gilbert J.G.R."/>
            <person name="Glison C."/>
            <person name="Grafham D.V."/>
            <person name="Gribble S."/>
            <person name="Griffiths C."/>
            <person name="Griffiths-Jones S."/>
            <person name="Grocock R."/>
            <person name="Guy J."/>
            <person name="Hall R.E."/>
            <person name="Hammond S."/>
            <person name="Harley J.L."/>
            <person name="Harrison E.S.I."/>
            <person name="Hart E.A."/>
            <person name="Heath P.D."/>
            <person name="Henderson C.D."/>
            <person name="Hopkins B.L."/>
            <person name="Howard P.J."/>
            <person name="Howden P.J."/>
            <person name="Huckle E."/>
            <person name="Johnson C."/>
            <person name="Johnson D."/>
            <person name="Joy A.A."/>
            <person name="Kay M."/>
            <person name="Keenan S."/>
            <person name="Kershaw J.K."/>
            <person name="Kimberley A.M."/>
            <person name="King A."/>
            <person name="Knights A."/>
            <person name="Laird G.K."/>
            <person name="Langford C."/>
            <person name="Lawlor S."/>
            <person name="Leongamornlert D.A."/>
            <person name="Leversha M."/>
            <person name="Lloyd C."/>
            <person name="Lloyd D.M."/>
            <person name="Lovell J."/>
            <person name="Martin S."/>
            <person name="Mashreghi-Mohammadi M."/>
            <person name="Matthews L."/>
            <person name="McLaren S."/>
            <person name="McLay K.E."/>
            <person name="McMurray A."/>
            <person name="Milne S."/>
            <person name="Nickerson T."/>
            <person name="Nisbett J."/>
            <person name="Nordsiek G."/>
            <person name="Pearce A.V."/>
            <person name="Peck A.I."/>
            <person name="Porter K.M."/>
            <person name="Pandian R."/>
            <person name="Pelan S."/>
            <person name="Phillimore B."/>
            <person name="Povey S."/>
            <person name="Ramsey Y."/>
            <person name="Rand V."/>
            <person name="Scharfe M."/>
            <person name="Sehra H.K."/>
            <person name="Shownkeen R."/>
            <person name="Sims S.K."/>
            <person name="Skuce C.D."/>
            <person name="Smith M."/>
            <person name="Steward C.A."/>
            <person name="Swarbreck D."/>
            <person name="Sycamore N."/>
            <person name="Tester J."/>
            <person name="Thorpe A."/>
            <person name="Tracey A."/>
            <person name="Tromans A."/>
            <person name="Thomas D.W."/>
            <person name="Wall M."/>
            <person name="Wallis J.M."/>
            <person name="West A.P."/>
            <person name="Whitehead S.L."/>
            <person name="Willey D.L."/>
            <person name="Williams S.A."/>
            <person name="Wilming L."/>
            <person name="Wray P.W."/>
            <person name="Young L."/>
            <person name="Ashurst J.L."/>
            <person name="Coulson A."/>
            <person name="Blocker H."/>
            <person name="Durbin R.M."/>
            <person name="Sulston J.E."/>
            <person name="Hubbard T."/>
            <person name="Jackson M.J."/>
            <person name="Bentley D.R."/>
            <person name="Beck S."/>
            <person name="Rogers J."/>
            <person name="Dunham I."/>
        </authorList>
    </citation>
    <scope>NUCLEOTIDE SEQUENCE [LARGE SCALE GENOMIC DNA]</scope>
</reference>
<reference key="4">
    <citation type="journal article" date="2004" name="Genome Res.">
        <title>The status, quality, and expansion of the NIH full-length cDNA project: the Mammalian Gene Collection (MGC).</title>
        <authorList>
            <consortium name="The MGC Project Team"/>
        </authorList>
    </citation>
    <scope>NUCLEOTIDE SEQUENCE [LARGE SCALE MRNA] (ISOFORM 1)</scope>
    <source>
        <tissue>Brain</tissue>
    </source>
</reference>
<reference key="5">
    <citation type="journal article" date="2010" name="Nature">
        <title>LRRC26 auxiliary protein allows BK channel activation at resting voltage without calcium.</title>
        <authorList>
            <person name="Yan J."/>
            <person name="Aldrich R.W."/>
        </authorList>
    </citation>
    <scope>FUNCTION</scope>
    <scope>INTERACTION WITH KCNMA1</scope>
    <scope>IDENTIFICATION BY MASS SPECTROMETRY</scope>
</reference>
<reference key="6">
    <citation type="journal article" date="2012" name="Proc. Natl. Acad. Sci. U.S.A.">
        <title>BK potassium channel modulation by leucine-rich repeat-containing proteins.</title>
        <authorList>
            <person name="Yan J."/>
            <person name="Aldrich R.W."/>
        </authorList>
    </citation>
    <scope>FUNCTION</scope>
    <scope>SUBUNIT</scope>
    <scope>SIGNAL SEQUENCE</scope>
    <scope>DISULFIDE BONDS</scope>
    <scope>GLYCOSYLATION AT ASN-147</scope>
    <scope>SUBCELLULAR LOCATION</scope>
</reference>
<name>LRC26_HUMAN</name>
<organism>
    <name type="scientific">Homo sapiens</name>
    <name type="common">Human</name>
    <dbReference type="NCBI Taxonomy" id="9606"/>
    <lineage>
        <taxon>Eukaryota</taxon>
        <taxon>Metazoa</taxon>
        <taxon>Chordata</taxon>
        <taxon>Craniata</taxon>
        <taxon>Vertebrata</taxon>
        <taxon>Euteleostomi</taxon>
        <taxon>Mammalia</taxon>
        <taxon>Eutheria</taxon>
        <taxon>Euarchontoglires</taxon>
        <taxon>Primates</taxon>
        <taxon>Haplorrhini</taxon>
        <taxon>Catarrhini</taxon>
        <taxon>Hominidae</taxon>
        <taxon>Homo</taxon>
    </lineage>
</organism>
<feature type="signal peptide">
    <location>
        <begin position="1"/>
        <end position="26"/>
    </location>
</feature>
<feature type="chain" id="PRO_0000309360" description="Leucine-rich repeat-containing protein 26">
    <location>
        <begin position="27"/>
        <end position="334"/>
    </location>
</feature>
<feature type="topological domain" description="Extracellular" evidence="1">
    <location>
        <begin position="27"/>
        <end position="261"/>
    </location>
</feature>
<feature type="transmembrane region" description="Helical" evidence="1">
    <location>
        <begin position="262"/>
        <end position="282"/>
    </location>
</feature>
<feature type="topological domain" description="Cytoplasmic" evidence="1">
    <location>
        <begin position="283"/>
        <end position="334"/>
    </location>
</feature>
<feature type="domain" description="LRRNT">
    <location>
        <begin position="34"/>
        <end position="71"/>
    </location>
</feature>
<feature type="repeat" description="LRR 1">
    <location>
        <begin position="72"/>
        <end position="93"/>
    </location>
</feature>
<feature type="repeat" description="LRR 2">
    <location>
        <begin position="96"/>
        <end position="117"/>
    </location>
</feature>
<feature type="repeat" description="LRR 3">
    <location>
        <begin position="120"/>
        <end position="141"/>
    </location>
</feature>
<feature type="repeat" description="LRR 4">
    <location>
        <begin position="144"/>
        <end position="167"/>
    </location>
</feature>
<feature type="repeat" description="LRR 5">
    <location>
        <begin position="168"/>
        <end position="190"/>
    </location>
</feature>
<feature type="domain" description="LRRCT">
    <location>
        <begin position="201"/>
        <end position="255"/>
    </location>
</feature>
<feature type="region of interest" description="Disordered" evidence="2">
    <location>
        <begin position="298"/>
        <end position="334"/>
    </location>
</feature>
<feature type="compositionally biased region" description="Pro residues" evidence="2">
    <location>
        <begin position="304"/>
        <end position="313"/>
    </location>
</feature>
<feature type="compositionally biased region" description="Low complexity" evidence="2">
    <location>
        <begin position="320"/>
        <end position="334"/>
    </location>
</feature>
<feature type="glycosylation site" description="N-linked (GlcNAc...) asparagine" evidence="7">
    <location>
        <position position="147"/>
    </location>
</feature>
<feature type="disulfide bond" evidence="1">
    <location>
        <begin position="43"/>
        <end position="49"/>
    </location>
</feature>
<feature type="disulfide bond" evidence="1">
    <location>
        <begin position="47"/>
        <end position="57"/>
    </location>
</feature>
<feature type="disulfide bond" evidence="1">
    <location>
        <begin position="205"/>
        <end position="231"/>
    </location>
</feature>
<feature type="disulfide bond" evidence="1">
    <location>
        <begin position="207"/>
        <end position="253"/>
    </location>
</feature>
<feature type="splice variant" id="VSP_040058" description="In isoform 2." evidence="8">
    <location>
        <begin position="1"/>
        <end position="289"/>
    </location>
</feature>
<feature type="splice variant" id="VSP_040205" description="In isoform 2." evidence="8">
    <original>C</original>
    <variation>M</variation>
    <location>
        <position position="290"/>
    </location>
</feature>
<feature type="sequence conflict" description="In Ref. 1; ABC79623 and 3; AAI40912." evidence="9" ref="1 3">
    <original>Q</original>
    <variation>H</variation>
    <location>
        <position position="27"/>
    </location>
</feature>
<feature type="strand" evidence="10">
    <location>
        <begin position="45"/>
        <end position="50"/>
    </location>
</feature>
<feature type="turn" evidence="10">
    <location>
        <begin position="51"/>
        <end position="53"/>
    </location>
</feature>
<feature type="strand" evidence="10">
    <location>
        <begin position="54"/>
        <end position="56"/>
    </location>
</feature>
<feature type="strand" evidence="10">
    <location>
        <begin position="75"/>
        <end position="77"/>
    </location>
</feature>
<feature type="turn" evidence="10">
    <location>
        <begin position="88"/>
        <end position="93"/>
    </location>
</feature>
<feature type="strand" evidence="10">
    <location>
        <begin position="99"/>
        <end position="101"/>
    </location>
</feature>
<feature type="turn" evidence="10">
    <location>
        <begin position="112"/>
        <end position="117"/>
    </location>
</feature>
<feature type="strand" evidence="10">
    <location>
        <begin position="123"/>
        <end position="125"/>
    </location>
</feature>
<feature type="turn" evidence="10">
    <location>
        <begin position="136"/>
        <end position="141"/>
    </location>
</feature>
<feature type="strand" evidence="10">
    <location>
        <begin position="147"/>
        <end position="149"/>
    </location>
</feature>
<feature type="helix" evidence="10">
    <location>
        <begin position="160"/>
        <end position="163"/>
    </location>
</feature>
<feature type="strand" evidence="10">
    <location>
        <begin position="171"/>
        <end position="173"/>
    </location>
</feature>
<feature type="helix" evidence="10">
    <location>
        <begin position="187"/>
        <end position="189"/>
    </location>
</feature>
<feature type="strand" evidence="10">
    <location>
        <begin position="195"/>
        <end position="197"/>
    </location>
</feature>
<feature type="helix" evidence="10">
    <location>
        <begin position="207"/>
        <end position="209"/>
    </location>
</feature>
<feature type="helix" evidence="10">
    <location>
        <begin position="210"/>
        <end position="218"/>
    </location>
</feature>
<feature type="helix" evidence="10">
    <location>
        <begin position="223"/>
        <end position="226"/>
    </location>
</feature>
<feature type="strand" evidence="10">
    <location>
        <begin position="233"/>
        <end position="236"/>
    </location>
</feature>
<feature type="helix" evidence="10">
    <location>
        <begin position="242"/>
        <end position="244"/>
    </location>
</feature>
<feature type="helix" evidence="10">
    <location>
        <begin position="248"/>
        <end position="250"/>
    </location>
</feature>
<feature type="strand" evidence="10">
    <location>
        <begin position="251"/>
        <end position="253"/>
    </location>
</feature>
<feature type="helix" evidence="10">
    <location>
        <begin position="260"/>
        <end position="296"/>
    </location>
</feature>
<feature type="strand" evidence="10">
    <location>
        <begin position="297"/>
        <end position="299"/>
    </location>
</feature>
<proteinExistence type="evidence at protein level"/>
<sequence length="334" mass="34857">MRGPSWSRPRPLLLLLLLLSPWPVWAQVSATASPSGSLGAPDCPEVCTCVPGGLASCSALSLPAVPPGLSLRLRALLLDHNRVRALPPGAFAGAGALQRLDLRENGLHSVHVRAFWGLGALQLLDLSANQLEALAPGTFAPLRALRNLSLAGNRLARLEPAALGALPLLRSLSLQDNELAALAPGLLGRLPALDALHLRGNPWGCGCALRPLCAWLRRHPLPASEAETVLCVWPGRLTLSPLTAFSDAAFSHCAQPLALRDLAVVYTLGPASFLVSLASCLALGSGLTACRARRRRLRTAALRPPRPPDPNPDPDPHGCASPADPGSPAAAAQA</sequence>
<comment type="function">
    <text evidence="6 7">Auxiliary protein of the large-conductance, voltage and calcium-activated potassium channel (BK alpha). Required for the conversion of BK alpha channels from a high-voltage to a low-voltage activated channel type in non-excitable cells. These are characterized by negative membrane voltages and constant low levels of calcium.</text>
</comment>
<comment type="subunit">
    <text evidence="6 7">Interacts with KCNMA1.</text>
</comment>
<comment type="interaction">
    <interactant intactId="EBI-15863320">
        <id>Q2I0M4</id>
    </interactant>
    <interactant intactId="EBI-1220676">
        <id>Q12791</id>
        <label>KCNMA1</label>
    </interactant>
    <organismsDiffer>false</organismsDiffer>
    <experiments>3</experiments>
</comment>
<comment type="interaction">
    <interactant intactId="EBI-15863320">
        <id>Q2I0M4</id>
    </interactant>
    <interactant intactId="EBI-15861807">
        <id>Q12791-5</id>
        <label>KCNMA1</label>
    </interactant>
    <organismsDiffer>false</organismsDiffer>
    <experiments>2</experiments>
</comment>
<comment type="subcellular location">
    <subcellularLocation>
        <location>Cell membrane</location>
        <topology>Single-pass type I membrane protein</topology>
    </subcellularLocation>
    <subcellularLocation>
        <location>Cytoplasm</location>
        <location>Cytoskeleton</location>
    </subcellularLocation>
    <text evidence="3">Localizes to the cytoplasm when expressed at high levels.</text>
</comment>
<comment type="alternative products">
    <event type="alternative splicing"/>
    <isoform>
        <id>Q2I0M4-1</id>
        <name>1</name>
        <name>L-CAPC</name>
        <sequence type="displayed"/>
    </isoform>
    <isoform>
        <id>Q2I0M4-2</id>
        <name>2</name>
        <name>S-CAPC</name>
        <sequence type="described" ref="VSP_040058 VSP_040205"/>
    </isoform>
</comment>
<comment type="tissue specificity">
    <text evidence="4 5">Isoform 1 is expressed highly in normal prostate and salivary gland, very weakly in colon, pancreas, and intestine, and not at all in other tissues. Isoform 1 is expressed highly in many cancer cell lines and in breast cancer, pancreatic cancer and colon cancer. Isoform 2 is expressed in cancer cell lines.</text>
</comment>
<comment type="domain">
    <text>The transmembrane domain is necessary for interaction with KCNMA1.</text>
</comment>
<comment type="miscellaneous">
    <molecule>Isoform 2</molecule>
    <text evidence="9">Translation initiates from a UGC codon. It is unsure whether the initiator amino acid is a modified cysteine or a methionine. Could also be the result of a proteolytic cleavage from a longer precursor.</text>
</comment>
<accession>Q2I0M4</accession>
<accession>B9EIR7</accession>
<accession>C3RUL3</accession>
<accession>Q5VSG2</accession>
<dbReference type="EMBL" id="DQ355157">
    <property type="protein sequence ID" value="ABC79623.1"/>
    <property type="molecule type" value="mRNA"/>
</dbReference>
<dbReference type="EMBL" id="EU588721">
    <property type="protein sequence ID" value="ACO90295.1"/>
    <property type="molecule type" value="mRNA"/>
</dbReference>
<dbReference type="EMBL" id="AL929554">
    <property type="status" value="NOT_ANNOTATED_CDS"/>
    <property type="molecule type" value="Genomic_DNA"/>
</dbReference>
<dbReference type="EMBL" id="BC140911">
    <property type="protein sequence ID" value="AAI40912.1"/>
    <property type="molecule type" value="mRNA"/>
</dbReference>
<dbReference type="CCDS" id="CCDS35184.1">
    <molecule id="Q2I0M4-1"/>
</dbReference>
<dbReference type="RefSeq" id="NP_001013675.1">
    <molecule id="Q2I0M4-1"/>
    <property type="nucleotide sequence ID" value="NM_001013653.3"/>
</dbReference>
<dbReference type="PDB" id="7YNZ">
    <property type="method" value="EM"/>
    <property type="resolution" value="3.50 A"/>
    <property type="chains" value="B/D/F/H=1-334"/>
</dbReference>
<dbReference type="PDB" id="7YO0">
    <property type="method" value="EM"/>
    <property type="resolution" value="3.60 A"/>
    <property type="chains" value="B/D/F/H=1-334"/>
</dbReference>
<dbReference type="PDB" id="7YO1">
    <property type="method" value="EM"/>
    <property type="resolution" value="3.60 A"/>
    <property type="chains" value="B/D/F/H=1-334"/>
</dbReference>
<dbReference type="PDB" id="7YO3">
    <property type="method" value="EM"/>
    <property type="resolution" value="3.10 A"/>
    <property type="chains" value="B=1-334"/>
</dbReference>
<dbReference type="PDB" id="7YO4">
    <property type="method" value="EM"/>
    <property type="resolution" value="3.90 A"/>
    <property type="chains" value="B/D/F/H=1-334"/>
</dbReference>
<dbReference type="PDB" id="8VAV">
    <property type="method" value="EM"/>
    <property type="resolution" value="3.13 A"/>
    <property type="chains" value="E/F/G/H=1-334"/>
</dbReference>
<dbReference type="PDB" id="8VAZ">
    <property type="method" value="EM"/>
    <property type="resolution" value="2.82 A"/>
    <property type="chains" value="E/F/G/H=1-334"/>
</dbReference>
<dbReference type="PDBsum" id="7YNZ"/>
<dbReference type="PDBsum" id="7YO0"/>
<dbReference type="PDBsum" id="7YO1"/>
<dbReference type="PDBsum" id="7YO3"/>
<dbReference type="PDBsum" id="7YO4"/>
<dbReference type="PDBsum" id="8VAV"/>
<dbReference type="PDBsum" id="8VAZ"/>
<dbReference type="EMDB" id="EMD-33976"/>
<dbReference type="EMDB" id="EMD-33977"/>
<dbReference type="EMDB" id="EMD-33978"/>
<dbReference type="EMDB" id="EMD-33980"/>
<dbReference type="EMDB" id="EMD-33981"/>
<dbReference type="EMDB" id="EMD-43106"/>
<dbReference type="EMDB" id="EMD-43107"/>
<dbReference type="SMR" id="Q2I0M4"/>
<dbReference type="CORUM" id="Q2I0M4"/>
<dbReference type="DIP" id="DIP-60459N"/>
<dbReference type="FunCoup" id="Q2I0M4">
    <property type="interactions" value="31"/>
</dbReference>
<dbReference type="IntAct" id="Q2I0M4">
    <property type="interactions" value="1"/>
</dbReference>
<dbReference type="STRING" id="9606.ENSP00000360597"/>
<dbReference type="TCDB" id="8.A.43.1.14">
    <property type="family name" value="the neat-domain containing methaemoglobin heme sequestration (n-mhs) family"/>
</dbReference>
<dbReference type="GlyConnect" id="1452">
    <property type="glycosylation" value="1 N-Linked glycan (1 site)"/>
</dbReference>
<dbReference type="GlyCosmos" id="Q2I0M4">
    <property type="glycosylation" value="1 site, 1 glycan"/>
</dbReference>
<dbReference type="GlyGen" id="Q2I0M4">
    <property type="glycosylation" value="1 site, 1 N-linked glycan (1 site)"/>
</dbReference>
<dbReference type="iPTMnet" id="Q2I0M4"/>
<dbReference type="PhosphoSitePlus" id="Q2I0M4"/>
<dbReference type="SwissPalm" id="Q2I0M4"/>
<dbReference type="BioMuta" id="LRRC26"/>
<dbReference type="DMDM" id="160410009"/>
<dbReference type="MassIVE" id="Q2I0M4"/>
<dbReference type="PaxDb" id="9606-ENSP00000360597"/>
<dbReference type="PeptideAtlas" id="Q2I0M4"/>
<dbReference type="ProteomicsDB" id="61296">
    <molecule id="Q2I0M4-1"/>
</dbReference>
<dbReference type="Antibodypedia" id="18941">
    <property type="antibodies" value="91 antibodies from 22 providers"/>
</dbReference>
<dbReference type="DNASU" id="389816"/>
<dbReference type="Ensembl" id="ENST00000371542.3">
    <molecule id="Q2I0M4-1"/>
    <property type="protein sequence ID" value="ENSP00000360597.3"/>
    <property type="gene ID" value="ENSG00000184709.7"/>
</dbReference>
<dbReference type="GeneID" id="389816"/>
<dbReference type="KEGG" id="hsa:389816"/>
<dbReference type="MANE-Select" id="ENST00000371542.3">
    <property type="protein sequence ID" value="ENSP00000360597.3"/>
    <property type="RefSeq nucleotide sequence ID" value="NM_001013653.3"/>
    <property type="RefSeq protein sequence ID" value="NP_001013675.1"/>
</dbReference>
<dbReference type="UCSC" id="uc004clp.4">
    <molecule id="Q2I0M4-1"/>
    <property type="organism name" value="human"/>
</dbReference>
<dbReference type="AGR" id="HGNC:31409"/>
<dbReference type="CTD" id="389816"/>
<dbReference type="DisGeNET" id="389816"/>
<dbReference type="GeneCards" id="LRRC26"/>
<dbReference type="HGNC" id="HGNC:31409">
    <property type="gene designation" value="LRRC26"/>
</dbReference>
<dbReference type="HPA" id="ENSG00000184709">
    <property type="expression patterns" value="Tissue enriched (salivary)"/>
</dbReference>
<dbReference type="MIM" id="613505">
    <property type="type" value="gene"/>
</dbReference>
<dbReference type="neXtProt" id="NX_Q2I0M4"/>
<dbReference type="OpenTargets" id="ENSG00000184709"/>
<dbReference type="PharmGKB" id="PA134952867"/>
<dbReference type="VEuPathDB" id="HostDB:ENSG00000184709"/>
<dbReference type="eggNOG" id="KOG0619">
    <property type="taxonomic scope" value="Eukaryota"/>
</dbReference>
<dbReference type="GeneTree" id="ENSGT00940000162780"/>
<dbReference type="HOGENOM" id="CLU_000288_18_10_1"/>
<dbReference type="InParanoid" id="Q2I0M4"/>
<dbReference type="OMA" id="DAAFSHC"/>
<dbReference type="OrthoDB" id="676979at2759"/>
<dbReference type="PAN-GO" id="Q2I0M4">
    <property type="GO annotations" value="4 GO annotations based on evolutionary models"/>
</dbReference>
<dbReference type="PhylomeDB" id="Q2I0M4"/>
<dbReference type="TreeFam" id="TF334689"/>
<dbReference type="PathwayCommons" id="Q2I0M4"/>
<dbReference type="SignaLink" id="Q2I0M4"/>
<dbReference type="BioGRID-ORCS" id="389816">
    <property type="hits" value="18 hits in 1138 CRISPR screens"/>
</dbReference>
<dbReference type="ChiTaRS" id="LRRC26">
    <property type="organism name" value="human"/>
</dbReference>
<dbReference type="GenomeRNAi" id="389816"/>
<dbReference type="Pharos" id="Q2I0M4">
    <property type="development level" value="Tbio"/>
</dbReference>
<dbReference type="PRO" id="PR:Q2I0M4"/>
<dbReference type="Proteomes" id="UP000005640">
    <property type="component" value="Chromosome 9"/>
</dbReference>
<dbReference type="RNAct" id="Q2I0M4">
    <property type="molecule type" value="protein"/>
</dbReference>
<dbReference type="Bgee" id="ENSG00000184709">
    <property type="expression patterns" value="Expressed in olfactory segment of nasal mucosa and 62 other cell types or tissues"/>
</dbReference>
<dbReference type="GO" id="GO:0005737">
    <property type="term" value="C:cytoplasm"/>
    <property type="evidence" value="ECO:0007669"/>
    <property type="project" value="UniProtKB-KW"/>
</dbReference>
<dbReference type="GO" id="GO:0005856">
    <property type="term" value="C:cytoskeleton"/>
    <property type="evidence" value="ECO:0007669"/>
    <property type="project" value="UniProtKB-SubCell"/>
</dbReference>
<dbReference type="GO" id="GO:0070062">
    <property type="term" value="C:extracellular exosome"/>
    <property type="evidence" value="ECO:0007005"/>
    <property type="project" value="UniProtKB"/>
</dbReference>
<dbReference type="GO" id="GO:0005886">
    <property type="term" value="C:plasma membrane"/>
    <property type="evidence" value="ECO:0000314"/>
    <property type="project" value="UniProtKB"/>
</dbReference>
<dbReference type="GO" id="GO:0008076">
    <property type="term" value="C:voltage-gated potassium channel complex"/>
    <property type="evidence" value="ECO:0000314"/>
    <property type="project" value="UniProtKB"/>
</dbReference>
<dbReference type="GO" id="GO:0099104">
    <property type="term" value="F:potassium channel activator activity"/>
    <property type="evidence" value="ECO:0000314"/>
    <property type="project" value="UniProtKB"/>
</dbReference>
<dbReference type="GO" id="GO:0015459">
    <property type="term" value="F:potassium channel regulator activity"/>
    <property type="evidence" value="ECO:0000314"/>
    <property type="project" value="UniProtKB"/>
</dbReference>
<dbReference type="GO" id="GO:0044325">
    <property type="term" value="F:transmembrane transporter binding"/>
    <property type="evidence" value="ECO:0000353"/>
    <property type="project" value="UniProtKB"/>
</dbReference>
<dbReference type="GO" id="GO:0005249">
    <property type="term" value="F:voltage-gated potassium channel activity"/>
    <property type="evidence" value="ECO:0000314"/>
    <property type="project" value="UniProtKB"/>
</dbReference>
<dbReference type="GO" id="GO:1903818">
    <property type="term" value="P:positive regulation of voltage-gated potassium channel activity"/>
    <property type="evidence" value="ECO:0000314"/>
    <property type="project" value="UniProtKB"/>
</dbReference>
<dbReference type="GO" id="GO:0071805">
    <property type="term" value="P:potassium ion transmembrane transport"/>
    <property type="evidence" value="ECO:0000314"/>
    <property type="project" value="UniProtKB"/>
</dbReference>
<dbReference type="FunFam" id="3.80.10.10:FF:000015">
    <property type="entry name" value="Leucine rich repeat containing 38"/>
    <property type="match status" value="1"/>
</dbReference>
<dbReference type="Gene3D" id="3.80.10.10">
    <property type="entry name" value="Ribonuclease Inhibitor"/>
    <property type="match status" value="1"/>
</dbReference>
<dbReference type="InterPro" id="IPR001611">
    <property type="entry name" value="Leu-rich_rpt"/>
</dbReference>
<dbReference type="InterPro" id="IPR003591">
    <property type="entry name" value="Leu-rich_rpt_typical-subtyp"/>
</dbReference>
<dbReference type="InterPro" id="IPR032675">
    <property type="entry name" value="LRR_dom_sf"/>
</dbReference>
<dbReference type="PANTHER" id="PTHR45773">
    <property type="entry name" value="SLIT AND NTRK-LIKE PROTEIN 4-RELATED"/>
    <property type="match status" value="1"/>
</dbReference>
<dbReference type="PANTHER" id="PTHR45773:SF5">
    <property type="entry name" value="SLIT AND NTRK-LIKE PROTEIN 5"/>
    <property type="match status" value="1"/>
</dbReference>
<dbReference type="Pfam" id="PF13855">
    <property type="entry name" value="LRR_8"/>
    <property type="match status" value="2"/>
</dbReference>
<dbReference type="SMART" id="SM00369">
    <property type="entry name" value="LRR_TYP"/>
    <property type="match status" value="5"/>
</dbReference>
<dbReference type="SUPFAM" id="SSF52058">
    <property type="entry name" value="L domain-like"/>
    <property type="match status" value="1"/>
</dbReference>
<keyword id="KW-0002">3D-structure</keyword>
<keyword id="KW-0025">Alternative splicing</keyword>
<keyword id="KW-1003">Cell membrane</keyword>
<keyword id="KW-0963">Cytoplasm</keyword>
<keyword id="KW-0206">Cytoskeleton</keyword>
<keyword id="KW-0903">Direct protein sequencing</keyword>
<keyword id="KW-1015">Disulfide bond</keyword>
<keyword id="KW-0325">Glycoprotein</keyword>
<keyword id="KW-0407">Ion channel</keyword>
<keyword id="KW-0406">Ion transport</keyword>
<keyword id="KW-0433">Leucine-rich repeat</keyword>
<keyword id="KW-0472">Membrane</keyword>
<keyword id="KW-1267">Proteomics identification</keyword>
<keyword id="KW-1185">Reference proteome</keyword>
<keyword id="KW-0677">Repeat</keyword>
<keyword id="KW-0732">Signal</keyword>
<keyword id="KW-0812">Transmembrane</keyword>
<keyword id="KW-1133">Transmembrane helix</keyword>
<keyword id="KW-0813">Transport</keyword>
<protein>
    <recommendedName>
        <fullName>Leucine-rich repeat-containing protein 26</fullName>
    </recommendedName>
    <alternativeName>
        <fullName>BK channel auxiliary gamma subunit LRRC26</fullName>
    </alternativeName>
    <alternativeName>
        <fullName>Cytokeratin-associated protein in cancer</fullName>
    </alternativeName>
</protein>
<evidence type="ECO:0000255" key="1"/>
<evidence type="ECO:0000256" key="2">
    <source>
        <dbReference type="SAM" id="MobiDB-lite"/>
    </source>
</evidence>
<evidence type="ECO:0000269" key="3">
    <source>
    </source>
</evidence>
<evidence type="ECO:0000269" key="4">
    <source>
    </source>
</evidence>
<evidence type="ECO:0000269" key="5">
    <source>
    </source>
</evidence>
<evidence type="ECO:0000269" key="6">
    <source>
    </source>
</evidence>
<evidence type="ECO:0000269" key="7">
    <source>
    </source>
</evidence>
<evidence type="ECO:0000303" key="8">
    <source>
    </source>
</evidence>
<evidence type="ECO:0000305" key="9"/>
<evidence type="ECO:0007829" key="10">
    <source>
        <dbReference type="PDB" id="7YO3"/>
    </source>
</evidence>
<gene>
    <name type="primary">LRRC26</name>
    <name type="synonym">CAPC</name>
</gene>